<proteinExistence type="inferred from homology"/>
<gene>
    <name evidence="1" type="primary">argJ</name>
    <name type="ordered locus">glr4034</name>
</gene>
<feature type="chain" id="PRO_0000002171" description="Arginine biosynthesis bifunctional protein ArgJ alpha chain" evidence="1">
    <location>
        <begin position="1"/>
        <end position="190"/>
    </location>
</feature>
<feature type="chain" id="PRO_0000002172" description="Arginine biosynthesis bifunctional protein ArgJ beta chain" evidence="1">
    <location>
        <begin position="191"/>
        <end position="406"/>
    </location>
</feature>
<feature type="active site" description="Nucleophile" evidence="1">
    <location>
        <position position="191"/>
    </location>
</feature>
<feature type="binding site" evidence="1">
    <location>
        <position position="154"/>
    </location>
    <ligand>
        <name>substrate</name>
    </ligand>
</feature>
<feature type="binding site" evidence="1">
    <location>
        <position position="180"/>
    </location>
    <ligand>
        <name>substrate</name>
    </ligand>
</feature>
<feature type="binding site" evidence="1">
    <location>
        <position position="191"/>
    </location>
    <ligand>
        <name>substrate</name>
    </ligand>
</feature>
<feature type="binding site" evidence="1">
    <location>
        <position position="278"/>
    </location>
    <ligand>
        <name>substrate</name>
    </ligand>
</feature>
<feature type="binding site" evidence="1">
    <location>
        <position position="401"/>
    </location>
    <ligand>
        <name>substrate</name>
    </ligand>
</feature>
<feature type="binding site" evidence="1">
    <location>
        <position position="406"/>
    </location>
    <ligand>
        <name>substrate</name>
    </ligand>
</feature>
<feature type="site" description="Involved in the stabilization of negative charge on the oxyanion by the formation of the oxyanion hole" evidence="1">
    <location>
        <position position="117"/>
    </location>
</feature>
<feature type="site" description="Involved in the stabilization of negative charge on the oxyanion by the formation of the oxyanion hole" evidence="1">
    <location>
        <position position="118"/>
    </location>
</feature>
<feature type="site" description="Cleavage; by autolysis" evidence="1">
    <location>
        <begin position="190"/>
        <end position="191"/>
    </location>
</feature>
<organism>
    <name type="scientific">Gloeobacter violaceus (strain ATCC 29082 / PCC 7421)</name>
    <dbReference type="NCBI Taxonomy" id="251221"/>
    <lineage>
        <taxon>Bacteria</taxon>
        <taxon>Bacillati</taxon>
        <taxon>Cyanobacteriota</taxon>
        <taxon>Cyanophyceae</taxon>
        <taxon>Gloeobacterales</taxon>
        <taxon>Gloeobacteraceae</taxon>
        <taxon>Gloeobacter</taxon>
    </lineage>
</organism>
<dbReference type="EC" id="2.3.1.35" evidence="1"/>
<dbReference type="EC" id="2.3.1.1" evidence="1"/>
<dbReference type="EMBL" id="BA000045">
    <property type="protein sequence ID" value="BAC91975.1"/>
    <property type="molecule type" value="Genomic_DNA"/>
</dbReference>
<dbReference type="RefSeq" id="NP_926980.1">
    <property type="nucleotide sequence ID" value="NC_005125.1"/>
</dbReference>
<dbReference type="RefSeq" id="WP_011144022.1">
    <property type="nucleotide sequence ID" value="NC_005125.1"/>
</dbReference>
<dbReference type="SMR" id="Q7NE46"/>
<dbReference type="FunCoup" id="Q7NE46">
    <property type="interactions" value="295"/>
</dbReference>
<dbReference type="STRING" id="251221.gene:10761552"/>
<dbReference type="MEROPS" id="T05.002"/>
<dbReference type="EnsemblBacteria" id="BAC91975">
    <property type="protein sequence ID" value="BAC91975"/>
    <property type="gene ID" value="BAC91975"/>
</dbReference>
<dbReference type="KEGG" id="gvi:glr4034"/>
<dbReference type="PATRIC" id="fig|251221.4.peg.4066"/>
<dbReference type="eggNOG" id="COG1364">
    <property type="taxonomic scope" value="Bacteria"/>
</dbReference>
<dbReference type="HOGENOM" id="CLU_027172_1_0_3"/>
<dbReference type="InParanoid" id="Q7NE46"/>
<dbReference type="OrthoDB" id="9804242at2"/>
<dbReference type="PhylomeDB" id="Q7NE46"/>
<dbReference type="UniPathway" id="UPA00068">
    <property type="reaction ID" value="UER00106"/>
</dbReference>
<dbReference type="UniPathway" id="UPA00068">
    <property type="reaction ID" value="UER00111"/>
</dbReference>
<dbReference type="Proteomes" id="UP000000557">
    <property type="component" value="Chromosome"/>
</dbReference>
<dbReference type="GO" id="GO:0005737">
    <property type="term" value="C:cytoplasm"/>
    <property type="evidence" value="ECO:0007669"/>
    <property type="project" value="UniProtKB-SubCell"/>
</dbReference>
<dbReference type="GO" id="GO:0004358">
    <property type="term" value="F:glutamate N-acetyltransferase activity"/>
    <property type="evidence" value="ECO:0007669"/>
    <property type="project" value="UniProtKB-UniRule"/>
</dbReference>
<dbReference type="GO" id="GO:0004042">
    <property type="term" value="F:L-glutamate N-acetyltransferase activity"/>
    <property type="evidence" value="ECO:0000318"/>
    <property type="project" value="GO_Central"/>
</dbReference>
<dbReference type="GO" id="GO:0006526">
    <property type="term" value="P:L-arginine biosynthetic process"/>
    <property type="evidence" value="ECO:0007669"/>
    <property type="project" value="UniProtKB-UniRule"/>
</dbReference>
<dbReference type="GO" id="GO:0006592">
    <property type="term" value="P:ornithine biosynthetic process"/>
    <property type="evidence" value="ECO:0000318"/>
    <property type="project" value="GO_Central"/>
</dbReference>
<dbReference type="CDD" id="cd02152">
    <property type="entry name" value="OAT"/>
    <property type="match status" value="1"/>
</dbReference>
<dbReference type="FunFam" id="3.10.20.340:FF:000001">
    <property type="entry name" value="Arginine biosynthesis bifunctional protein ArgJ, chloroplastic"/>
    <property type="match status" value="1"/>
</dbReference>
<dbReference type="FunFam" id="3.60.70.12:FF:000001">
    <property type="entry name" value="Arginine biosynthesis bifunctional protein ArgJ, chloroplastic"/>
    <property type="match status" value="1"/>
</dbReference>
<dbReference type="Gene3D" id="3.10.20.340">
    <property type="entry name" value="ArgJ beta chain, C-terminal domain"/>
    <property type="match status" value="1"/>
</dbReference>
<dbReference type="Gene3D" id="3.60.70.12">
    <property type="entry name" value="L-amino peptidase D-ALA esterase/amidase"/>
    <property type="match status" value="1"/>
</dbReference>
<dbReference type="HAMAP" id="MF_01106">
    <property type="entry name" value="ArgJ"/>
    <property type="match status" value="1"/>
</dbReference>
<dbReference type="InterPro" id="IPR002813">
    <property type="entry name" value="Arg_biosynth_ArgJ"/>
</dbReference>
<dbReference type="InterPro" id="IPR016117">
    <property type="entry name" value="ArgJ-like_dom_sf"/>
</dbReference>
<dbReference type="InterPro" id="IPR042195">
    <property type="entry name" value="ArgJ_beta_C"/>
</dbReference>
<dbReference type="NCBIfam" id="TIGR00120">
    <property type="entry name" value="ArgJ"/>
    <property type="match status" value="1"/>
</dbReference>
<dbReference type="NCBIfam" id="NF003802">
    <property type="entry name" value="PRK05388.1"/>
    <property type="match status" value="1"/>
</dbReference>
<dbReference type="PANTHER" id="PTHR23100">
    <property type="entry name" value="ARGININE BIOSYNTHESIS BIFUNCTIONAL PROTEIN ARGJ"/>
    <property type="match status" value="1"/>
</dbReference>
<dbReference type="PANTHER" id="PTHR23100:SF0">
    <property type="entry name" value="ARGININE BIOSYNTHESIS BIFUNCTIONAL PROTEIN ARGJ, MITOCHONDRIAL"/>
    <property type="match status" value="1"/>
</dbReference>
<dbReference type="Pfam" id="PF01960">
    <property type="entry name" value="ArgJ"/>
    <property type="match status" value="1"/>
</dbReference>
<dbReference type="SUPFAM" id="SSF56266">
    <property type="entry name" value="DmpA/ArgJ-like"/>
    <property type="match status" value="1"/>
</dbReference>
<sequence length="406" mass="41584">MADFEWIDGGVTAAKGFRAGGIASGIKPSGKTDLALIYSENPSAAAGVYTTNLVQAAPVAYNRNLLQQRGKACAIVVNSGNANAATGKAGEEAAIETAQVFARALGFSADQVLVASTGVIGVPLPIEKIRTAAQALVDAATETGSDAAAEAILTTDLVAKSCAVRALIGGKTVHVGGIAKGSGMIHPQMATLLAFITSDCSVDIDLWRQIVARATDRSFNQITVDGDTSTNDMLLALASGEAKNPRILDAASPEAGLLEQMVSAVCVDLAKKVVRDGEGATKLIEVQVAGTGDDAQARKIALTVASSSLVKSAMFGNDPNWGRLAAAAGRAGVEFDPAALAVRLGAFALMEVGQPLAFDRAAASDYLKGSDTVEVHLQVGPGTGNGIAWGCDLSYDYVKINAEYTT</sequence>
<evidence type="ECO:0000255" key="1">
    <source>
        <dbReference type="HAMAP-Rule" id="MF_01106"/>
    </source>
</evidence>
<reference key="1">
    <citation type="journal article" date="2003" name="DNA Res.">
        <title>Complete genome structure of Gloeobacter violaceus PCC 7421, a cyanobacterium that lacks thylakoids.</title>
        <authorList>
            <person name="Nakamura Y."/>
            <person name="Kaneko T."/>
            <person name="Sato S."/>
            <person name="Mimuro M."/>
            <person name="Miyashita H."/>
            <person name="Tsuchiya T."/>
            <person name="Sasamoto S."/>
            <person name="Watanabe A."/>
            <person name="Kawashima K."/>
            <person name="Kishida Y."/>
            <person name="Kiyokawa C."/>
            <person name="Kohara M."/>
            <person name="Matsumoto M."/>
            <person name="Matsuno A."/>
            <person name="Nakazaki N."/>
            <person name="Shimpo S."/>
            <person name="Takeuchi C."/>
            <person name="Yamada M."/>
            <person name="Tabata S."/>
        </authorList>
    </citation>
    <scope>NUCLEOTIDE SEQUENCE [LARGE SCALE GENOMIC DNA]</scope>
    <source>
        <strain>ATCC 29082 / PCC 7421</strain>
    </source>
</reference>
<accession>Q7NE46</accession>
<name>ARGJ_GLOVI</name>
<protein>
    <recommendedName>
        <fullName evidence="1">Arginine biosynthesis bifunctional protein ArgJ</fullName>
    </recommendedName>
    <domain>
        <recommendedName>
            <fullName evidence="1">Glutamate N-acetyltransferase</fullName>
            <ecNumber evidence="1">2.3.1.35</ecNumber>
        </recommendedName>
        <alternativeName>
            <fullName evidence="1">Ornithine acetyltransferase</fullName>
            <shortName evidence="1">OATase</shortName>
        </alternativeName>
        <alternativeName>
            <fullName evidence="1">Ornithine transacetylase</fullName>
        </alternativeName>
    </domain>
    <domain>
        <recommendedName>
            <fullName evidence="1">Amino-acid acetyltransferase</fullName>
            <ecNumber evidence="1">2.3.1.1</ecNumber>
        </recommendedName>
        <alternativeName>
            <fullName evidence="1">N-acetylglutamate synthase</fullName>
            <shortName evidence="1">AGSase</shortName>
        </alternativeName>
    </domain>
    <component>
        <recommendedName>
            <fullName evidence="1">Arginine biosynthesis bifunctional protein ArgJ alpha chain</fullName>
        </recommendedName>
    </component>
    <component>
        <recommendedName>
            <fullName evidence="1">Arginine biosynthesis bifunctional protein ArgJ beta chain</fullName>
        </recommendedName>
    </component>
</protein>
<keyword id="KW-0012">Acyltransferase</keyword>
<keyword id="KW-0028">Amino-acid biosynthesis</keyword>
<keyword id="KW-0055">Arginine biosynthesis</keyword>
<keyword id="KW-0068">Autocatalytic cleavage</keyword>
<keyword id="KW-0963">Cytoplasm</keyword>
<keyword id="KW-0511">Multifunctional enzyme</keyword>
<keyword id="KW-1185">Reference proteome</keyword>
<keyword id="KW-0808">Transferase</keyword>
<comment type="function">
    <text evidence="1">Catalyzes two activities which are involved in the cyclic version of arginine biosynthesis: the synthesis of N-acetylglutamate from glutamate and acetyl-CoA as the acetyl donor, and of ornithine by transacetylation between N(2)-acetylornithine and glutamate.</text>
</comment>
<comment type="catalytic activity">
    <reaction evidence="1">
        <text>N(2)-acetyl-L-ornithine + L-glutamate = N-acetyl-L-glutamate + L-ornithine</text>
        <dbReference type="Rhea" id="RHEA:15349"/>
        <dbReference type="ChEBI" id="CHEBI:29985"/>
        <dbReference type="ChEBI" id="CHEBI:44337"/>
        <dbReference type="ChEBI" id="CHEBI:46911"/>
        <dbReference type="ChEBI" id="CHEBI:57805"/>
        <dbReference type="EC" id="2.3.1.35"/>
    </reaction>
</comment>
<comment type="catalytic activity">
    <reaction evidence="1">
        <text>L-glutamate + acetyl-CoA = N-acetyl-L-glutamate + CoA + H(+)</text>
        <dbReference type="Rhea" id="RHEA:24292"/>
        <dbReference type="ChEBI" id="CHEBI:15378"/>
        <dbReference type="ChEBI" id="CHEBI:29985"/>
        <dbReference type="ChEBI" id="CHEBI:44337"/>
        <dbReference type="ChEBI" id="CHEBI:57287"/>
        <dbReference type="ChEBI" id="CHEBI:57288"/>
        <dbReference type="EC" id="2.3.1.1"/>
    </reaction>
</comment>
<comment type="pathway">
    <text evidence="1">Amino-acid biosynthesis; L-arginine biosynthesis; L-ornithine and N-acetyl-L-glutamate from L-glutamate and N(2)-acetyl-L-ornithine (cyclic): step 1/1.</text>
</comment>
<comment type="pathway">
    <text evidence="1">Amino-acid biosynthesis; L-arginine biosynthesis; N(2)-acetyl-L-ornithine from L-glutamate: step 1/4.</text>
</comment>
<comment type="subunit">
    <text evidence="1">Heterotetramer of two alpha and two beta chains.</text>
</comment>
<comment type="subcellular location">
    <subcellularLocation>
        <location evidence="1">Cytoplasm</location>
    </subcellularLocation>
</comment>
<comment type="similarity">
    <text evidence="1">Belongs to the ArgJ family.</text>
</comment>